<name>TILS_MALP2</name>
<feature type="chain" id="PRO_0000181730" description="tRNA(Ile)-lysidine synthase">
    <location>
        <begin position="1"/>
        <end position="295"/>
    </location>
</feature>
<feature type="binding site" evidence="1">
    <location>
        <begin position="10"/>
        <end position="15"/>
    </location>
    <ligand>
        <name>ATP</name>
        <dbReference type="ChEBI" id="CHEBI:30616"/>
    </ligand>
</feature>
<gene>
    <name evidence="1" type="primary">tilS</name>
    <name type="ordered locus">MYPE1460</name>
</gene>
<accession>Q8EWQ7</accession>
<keyword id="KW-0067">ATP-binding</keyword>
<keyword id="KW-0963">Cytoplasm</keyword>
<keyword id="KW-0436">Ligase</keyword>
<keyword id="KW-0547">Nucleotide-binding</keyword>
<keyword id="KW-1185">Reference proteome</keyword>
<keyword id="KW-0819">tRNA processing</keyword>
<sequence>MKHKYLIAVSGGPDSMALLNKKRHLVEAVCHVNYHDREDSDNDEKIVRDYCKKYNLKLFVFDTHKDDVSKYKDINNLQTWYREIRYDFFEKISQELGIKKILIAHQKNDFLESAYMSLNKNKKNLFLGIRRKSKFRSLILIRPLLNKTKKSLEQYCRSKNIEFVIDYTNFWDRYSRNVVRKMMAEWDKKTFQKFYLKVKWFNLKNMFFIKLLDSKFNNWIKQDFDINYFLKIKNNYKESLIYLFLNHIGIKPNENKIEQIIEFINKNKNGSVKKYRLKENQFIEIKNKKILYSIC</sequence>
<comment type="function">
    <text evidence="1">Ligates lysine onto the cytidine present at position 34 of the AUA codon-specific tRNA(Ile) that contains the anticodon CAU, in an ATP-dependent manner. Cytidine is converted to lysidine, thus changing the amino acid specificity of the tRNA from methionine to isoleucine.</text>
</comment>
<comment type="catalytic activity">
    <reaction evidence="1">
        <text>cytidine(34) in tRNA(Ile2) + L-lysine + ATP = lysidine(34) in tRNA(Ile2) + AMP + diphosphate + H(+)</text>
        <dbReference type="Rhea" id="RHEA:43744"/>
        <dbReference type="Rhea" id="RHEA-COMP:10625"/>
        <dbReference type="Rhea" id="RHEA-COMP:10670"/>
        <dbReference type="ChEBI" id="CHEBI:15378"/>
        <dbReference type="ChEBI" id="CHEBI:30616"/>
        <dbReference type="ChEBI" id="CHEBI:32551"/>
        <dbReference type="ChEBI" id="CHEBI:33019"/>
        <dbReference type="ChEBI" id="CHEBI:82748"/>
        <dbReference type="ChEBI" id="CHEBI:83665"/>
        <dbReference type="ChEBI" id="CHEBI:456215"/>
        <dbReference type="EC" id="6.3.4.19"/>
    </reaction>
</comment>
<comment type="subcellular location">
    <subcellularLocation>
        <location evidence="1">Cytoplasm</location>
    </subcellularLocation>
</comment>
<comment type="domain">
    <text>The N-terminal region contains the highly conserved SGGXDS motif, predicted to be a P-loop motif involved in ATP binding.</text>
</comment>
<comment type="similarity">
    <text evidence="1">Belongs to the tRNA(Ile)-lysidine synthase family.</text>
</comment>
<organism>
    <name type="scientific">Malacoplasma penetrans (strain HF-2)</name>
    <name type="common">Mycoplasma penetrans</name>
    <dbReference type="NCBI Taxonomy" id="272633"/>
    <lineage>
        <taxon>Bacteria</taxon>
        <taxon>Bacillati</taxon>
        <taxon>Mycoplasmatota</taxon>
        <taxon>Mycoplasmoidales</taxon>
        <taxon>Mycoplasmoidaceae</taxon>
        <taxon>Malacoplasma</taxon>
    </lineage>
</organism>
<evidence type="ECO:0000255" key="1">
    <source>
        <dbReference type="HAMAP-Rule" id="MF_01161"/>
    </source>
</evidence>
<protein>
    <recommendedName>
        <fullName evidence="1">tRNA(Ile)-lysidine synthase</fullName>
        <ecNumber evidence="1">6.3.4.19</ecNumber>
    </recommendedName>
    <alternativeName>
        <fullName evidence="1">tRNA(Ile)-2-lysyl-cytidine synthase</fullName>
    </alternativeName>
    <alternativeName>
        <fullName evidence="1">tRNA(Ile)-lysidine synthetase</fullName>
    </alternativeName>
</protein>
<dbReference type="EC" id="6.3.4.19" evidence="1"/>
<dbReference type="EMBL" id="BA000026">
    <property type="protein sequence ID" value="BAC43937.1"/>
    <property type="molecule type" value="Genomic_DNA"/>
</dbReference>
<dbReference type="RefSeq" id="WP_011076973.1">
    <property type="nucleotide sequence ID" value="NC_004432.1"/>
</dbReference>
<dbReference type="SMR" id="Q8EWQ7"/>
<dbReference type="STRING" id="272633.gene:10731245"/>
<dbReference type="KEGG" id="mpe:MYPE1460"/>
<dbReference type="eggNOG" id="COG0037">
    <property type="taxonomic scope" value="Bacteria"/>
</dbReference>
<dbReference type="HOGENOM" id="CLU_018869_0_2_14"/>
<dbReference type="InParanoid" id="Q8EWQ7"/>
<dbReference type="Proteomes" id="UP000002522">
    <property type="component" value="Chromosome"/>
</dbReference>
<dbReference type="GO" id="GO:0005737">
    <property type="term" value="C:cytoplasm"/>
    <property type="evidence" value="ECO:0007669"/>
    <property type="project" value="UniProtKB-SubCell"/>
</dbReference>
<dbReference type="GO" id="GO:0005524">
    <property type="term" value="F:ATP binding"/>
    <property type="evidence" value="ECO:0007669"/>
    <property type="project" value="UniProtKB-UniRule"/>
</dbReference>
<dbReference type="GO" id="GO:0032267">
    <property type="term" value="F:tRNA(Ile)-lysidine synthase activity"/>
    <property type="evidence" value="ECO:0007669"/>
    <property type="project" value="UniProtKB-EC"/>
</dbReference>
<dbReference type="GO" id="GO:0006400">
    <property type="term" value="P:tRNA modification"/>
    <property type="evidence" value="ECO:0007669"/>
    <property type="project" value="UniProtKB-UniRule"/>
</dbReference>
<dbReference type="CDD" id="cd01992">
    <property type="entry name" value="TilS_N"/>
    <property type="match status" value="1"/>
</dbReference>
<dbReference type="Gene3D" id="3.40.50.620">
    <property type="entry name" value="HUPs"/>
    <property type="match status" value="1"/>
</dbReference>
<dbReference type="HAMAP" id="MF_01161">
    <property type="entry name" value="tRNA_Ile_lys_synt"/>
    <property type="match status" value="1"/>
</dbReference>
<dbReference type="InterPro" id="IPR014729">
    <property type="entry name" value="Rossmann-like_a/b/a_fold"/>
</dbReference>
<dbReference type="InterPro" id="IPR011063">
    <property type="entry name" value="TilS/TtcA_N"/>
</dbReference>
<dbReference type="InterPro" id="IPR012094">
    <property type="entry name" value="tRNA_Ile_lys_synt"/>
</dbReference>
<dbReference type="InterPro" id="IPR012795">
    <property type="entry name" value="tRNA_Ile_lys_synt_N"/>
</dbReference>
<dbReference type="NCBIfam" id="TIGR02432">
    <property type="entry name" value="lysidine_TilS_N"/>
    <property type="match status" value="1"/>
</dbReference>
<dbReference type="PANTHER" id="PTHR43033">
    <property type="entry name" value="TRNA(ILE)-LYSIDINE SYNTHASE-RELATED"/>
    <property type="match status" value="1"/>
</dbReference>
<dbReference type="PANTHER" id="PTHR43033:SF1">
    <property type="entry name" value="TRNA(ILE)-LYSIDINE SYNTHASE-RELATED"/>
    <property type="match status" value="1"/>
</dbReference>
<dbReference type="Pfam" id="PF01171">
    <property type="entry name" value="ATP_bind_3"/>
    <property type="match status" value="1"/>
</dbReference>
<dbReference type="SUPFAM" id="SSF52402">
    <property type="entry name" value="Adenine nucleotide alpha hydrolases-like"/>
    <property type="match status" value="1"/>
</dbReference>
<reference key="1">
    <citation type="journal article" date="2002" name="Nucleic Acids Res.">
        <title>The complete genomic sequence of Mycoplasma penetrans, an intracellular bacterial pathogen in humans.</title>
        <authorList>
            <person name="Sasaki Y."/>
            <person name="Ishikawa J."/>
            <person name="Yamashita A."/>
            <person name="Oshima K."/>
            <person name="Kenri T."/>
            <person name="Furuya K."/>
            <person name="Yoshino C."/>
            <person name="Horino A."/>
            <person name="Shiba T."/>
            <person name="Sasaki T."/>
            <person name="Hattori M."/>
        </authorList>
    </citation>
    <scope>NUCLEOTIDE SEQUENCE [LARGE SCALE GENOMIC DNA]</scope>
    <source>
        <strain>HF-2</strain>
    </source>
</reference>
<proteinExistence type="inferred from homology"/>